<accession>Q92RN9</accession>
<protein>
    <recommendedName>
        <fullName>Putative sugar lactone lactonase</fullName>
        <ecNumber>3.1.1.-</ecNumber>
    </recommendedName>
</protein>
<evidence type="ECO:0000250" key="1"/>
<evidence type="ECO:0000269" key="2">
    <source>
    </source>
</evidence>
<evidence type="ECO:0000305" key="3"/>
<organism>
    <name type="scientific">Rhizobium meliloti (strain 1021)</name>
    <name type="common">Ensifer meliloti</name>
    <name type="synonym">Sinorhizobium meliloti</name>
    <dbReference type="NCBI Taxonomy" id="266834"/>
    <lineage>
        <taxon>Bacteria</taxon>
        <taxon>Pseudomonadati</taxon>
        <taxon>Pseudomonadota</taxon>
        <taxon>Alphaproteobacteria</taxon>
        <taxon>Hyphomicrobiales</taxon>
        <taxon>Rhizobiaceae</taxon>
        <taxon>Sinorhizobium/Ensifer group</taxon>
        <taxon>Sinorhizobium</taxon>
    </lineage>
</organism>
<sequence>MTDLVPFSGRTLSEAASELGEGPTFDPGTGTAWWFNITGRELHELHLESGRKAIHPLPFLGSVLAVIDPLRQLIASDQGLFVRDTESSKLGHFATLEEKPGNRSNDGRIHPCGALWIGTMGRSAEKHAGAIYHVAGSRVTKLYSNITIPNAICFSPDGATAYFTDTDVNQLMRVDIDPATALPTGDPVLLSDESTSPGGVDGAVCDADGLIWNARWGASAVEVYKPDGQKVARYAVPATQPSCPAFVGAKAERLLVTSAWQGMDDAARAADPHAGKTFELGIEVKGRFEPAFRL</sequence>
<dbReference type="EC" id="3.1.1.-"/>
<dbReference type="EMBL" id="AL591688">
    <property type="protein sequence ID" value="CAC45395.1"/>
    <property type="molecule type" value="Genomic_DNA"/>
</dbReference>
<dbReference type="RefSeq" id="NP_384929.1">
    <property type="nucleotide sequence ID" value="NC_003047.1"/>
</dbReference>
<dbReference type="RefSeq" id="WP_010968848.1">
    <property type="nucleotide sequence ID" value="NC_003047.1"/>
</dbReference>
<dbReference type="SMR" id="Q92RN9"/>
<dbReference type="EnsemblBacteria" id="CAC45395">
    <property type="protein sequence ID" value="CAC45395"/>
    <property type="gene ID" value="SMc00883"/>
</dbReference>
<dbReference type="KEGG" id="sme:SMc00883"/>
<dbReference type="PATRIC" id="fig|266834.11.peg.2213"/>
<dbReference type="eggNOG" id="COG3386">
    <property type="taxonomic scope" value="Bacteria"/>
</dbReference>
<dbReference type="HOGENOM" id="CLU_036110_3_1_5"/>
<dbReference type="OrthoDB" id="2633250at2"/>
<dbReference type="Proteomes" id="UP000001976">
    <property type="component" value="Chromosome"/>
</dbReference>
<dbReference type="GO" id="GO:0005509">
    <property type="term" value="F:calcium ion binding"/>
    <property type="evidence" value="ECO:0007669"/>
    <property type="project" value="TreeGrafter"/>
</dbReference>
<dbReference type="GO" id="GO:0004341">
    <property type="term" value="F:gluconolactonase activity"/>
    <property type="evidence" value="ECO:0007669"/>
    <property type="project" value="TreeGrafter"/>
</dbReference>
<dbReference type="GO" id="GO:0019853">
    <property type="term" value="P:L-ascorbic acid biosynthetic process"/>
    <property type="evidence" value="ECO:0007669"/>
    <property type="project" value="TreeGrafter"/>
</dbReference>
<dbReference type="Gene3D" id="2.120.10.30">
    <property type="entry name" value="TolB, C-terminal domain"/>
    <property type="match status" value="1"/>
</dbReference>
<dbReference type="InterPro" id="IPR011042">
    <property type="entry name" value="6-blade_b-propeller_TolB-like"/>
</dbReference>
<dbReference type="InterPro" id="IPR013658">
    <property type="entry name" value="SGL"/>
</dbReference>
<dbReference type="InterPro" id="IPR005511">
    <property type="entry name" value="SMP-30"/>
</dbReference>
<dbReference type="PANTHER" id="PTHR10907">
    <property type="entry name" value="REGUCALCIN"/>
    <property type="match status" value="1"/>
</dbReference>
<dbReference type="PANTHER" id="PTHR10907:SF47">
    <property type="entry name" value="REGUCALCIN"/>
    <property type="match status" value="1"/>
</dbReference>
<dbReference type="Pfam" id="PF08450">
    <property type="entry name" value="SGL"/>
    <property type="match status" value="1"/>
</dbReference>
<dbReference type="PRINTS" id="PR01790">
    <property type="entry name" value="SMP30FAMILY"/>
</dbReference>
<dbReference type="SUPFAM" id="SSF63829">
    <property type="entry name" value="Calcium-dependent phosphotriesterase"/>
    <property type="match status" value="1"/>
</dbReference>
<keyword id="KW-0378">Hydrolase</keyword>
<keyword id="KW-0479">Metal-binding</keyword>
<keyword id="KW-1185">Reference proteome</keyword>
<comment type="function">
    <text evidence="3">Involved in the degradation of galactose via the DeLey-Doudoroff pathway.</text>
</comment>
<comment type="cofactor">
    <cofactor evidence="1">
        <name>a divalent metal cation</name>
        <dbReference type="ChEBI" id="CHEBI:60240"/>
    </cofactor>
    <text evidence="1">Binds 1 divalent metal cation per subunit.</text>
</comment>
<comment type="disruption phenotype">
    <text evidence="2">Cells lacking this gene exhibit no detectable phenotype when grown on galactose as sole carbon source.</text>
</comment>
<comment type="similarity">
    <text evidence="3">Belongs to the SMP-30/CGR1 family.</text>
</comment>
<gene>
    <name type="ordered locus">R00823</name>
    <name type="ORF">SMc00883</name>
</gene>
<reference key="1">
    <citation type="journal article" date="2001" name="Proc. Natl. Acad. Sci. U.S.A.">
        <title>Analysis of the chromosome sequence of the legume symbiont Sinorhizobium meliloti strain 1021.</title>
        <authorList>
            <person name="Capela D."/>
            <person name="Barloy-Hubler F."/>
            <person name="Gouzy J."/>
            <person name="Bothe G."/>
            <person name="Ampe F."/>
            <person name="Batut J."/>
            <person name="Boistard P."/>
            <person name="Becker A."/>
            <person name="Boutry M."/>
            <person name="Cadieu E."/>
            <person name="Dreano S."/>
            <person name="Gloux S."/>
            <person name="Godrie T."/>
            <person name="Goffeau A."/>
            <person name="Kahn D."/>
            <person name="Kiss E."/>
            <person name="Lelaure V."/>
            <person name="Masuy D."/>
            <person name="Pohl T."/>
            <person name="Portetelle D."/>
            <person name="Puehler A."/>
            <person name="Purnelle B."/>
            <person name="Ramsperger U."/>
            <person name="Renard C."/>
            <person name="Thebault P."/>
            <person name="Vandenbol M."/>
            <person name="Weidner S."/>
            <person name="Galibert F."/>
        </authorList>
    </citation>
    <scope>NUCLEOTIDE SEQUENCE [LARGE SCALE GENOMIC DNA]</scope>
    <source>
        <strain>1021</strain>
    </source>
</reference>
<reference key="2">
    <citation type="journal article" date="2001" name="Science">
        <title>The composite genome of the legume symbiont Sinorhizobium meliloti.</title>
        <authorList>
            <person name="Galibert F."/>
            <person name="Finan T.M."/>
            <person name="Long S.R."/>
            <person name="Puehler A."/>
            <person name="Abola P."/>
            <person name="Ampe F."/>
            <person name="Barloy-Hubler F."/>
            <person name="Barnett M.J."/>
            <person name="Becker A."/>
            <person name="Boistard P."/>
            <person name="Bothe G."/>
            <person name="Boutry M."/>
            <person name="Bowser L."/>
            <person name="Buhrmester J."/>
            <person name="Cadieu E."/>
            <person name="Capela D."/>
            <person name="Chain P."/>
            <person name="Cowie A."/>
            <person name="Davis R.W."/>
            <person name="Dreano S."/>
            <person name="Federspiel N.A."/>
            <person name="Fisher R.F."/>
            <person name="Gloux S."/>
            <person name="Godrie T."/>
            <person name="Goffeau A."/>
            <person name="Golding B."/>
            <person name="Gouzy J."/>
            <person name="Gurjal M."/>
            <person name="Hernandez-Lucas I."/>
            <person name="Hong A."/>
            <person name="Huizar L."/>
            <person name="Hyman R.W."/>
            <person name="Jones T."/>
            <person name="Kahn D."/>
            <person name="Kahn M.L."/>
            <person name="Kalman S."/>
            <person name="Keating D.H."/>
            <person name="Kiss E."/>
            <person name="Komp C."/>
            <person name="Lelaure V."/>
            <person name="Masuy D."/>
            <person name="Palm C."/>
            <person name="Peck M.C."/>
            <person name="Pohl T.M."/>
            <person name="Portetelle D."/>
            <person name="Purnelle B."/>
            <person name="Ramsperger U."/>
            <person name="Surzycki R."/>
            <person name="Thebault P."/>
            <person name="Vandenbol M."/>
            <person name="Vorhoelter F.J."/>
            <person name="Weidner S."/>
            <person name="Wells D.H."/>
            <person name="Wong K."/>
            <person name="Yeh K.-C."/>
            <person name="Batut J."/>
        </authorList>
    </citation>
    <scope>NUCLEOTIDE SEQUENCE [LARGE SCALE GENOMIC DNA]</scope>
    <source>
        <strain>1021</strain>
    </source>
</reference>
<reference key="3">
    <citation type="journal article" date="2012" name="J. Bacteriol.">
        <title>Inability to catabolize galactose leads to increased ability to compete for nodule occupancy in Sinorhizobium meliloti.</title>
        <authorList>
            <person name="Geddes B.A."/>
            <person name="Oresnik I.J."/>
        </authorList>
    </citation>
    <scope>DISRUPTION PHENOTYPE</scope>
    <source>
        <strain>1021</strain>
    </source>
</reference>
<feature type="chain" id="PRO_0000428932" description="Putative sugar lactone lactonase">
    <location>
        <begin position="1"/>
        <end position="294"/>
    </location>
</feature>
<feature type="active site" description="Proton donor/acceptor" evidence="1">
    <location>
        <position position="201"/>
    </location>
</feature>
<feature type="binding site" evidence="1">
    <location>
        <position position="21"/>
    </location>
    <ligand>
        <name>a divalent metal cation</name>
        <dbReference type="ChEBI" id="CHEBI:60240"/>
    </ligand>
</feature>
<feature type="binding site" evidence="1">
    <location>
        <position position="150"/>
    </location>
    <ligand>
        <name>a divalent metal cation</name>
        <dbReference type="ChEBI" id="CHEBI:60240"/>
    </ligand>
</feature>
<feature type="binding site" evidence="1">
    <location>
        <position position="201"/>
    </location>
    <ligand>
        <name>a divalent metal cation</name>
        <dbReference type="ChEBI" id="CHEBI:60240"/>
    </ligand>
</feature>
<name>GALAB_RHIME</name>
<proteinExistence type="inferred from homology"/>